<keyword id="KW-0687">Ribonucleoprotein</keyword>
<keyword id="KW-0689">Ribosomal protein</keyword>
<keyword id="KW-0694">RNA-binding</keyword>
<keyword id="KW-0699">rRNA-binding</keyword>
<feature type="chain" id="PRO_0000243186" description="Large ribosomal subunit protein uL22">
    <location>
        <begin position="1"/>
        <end position="110"/>
    </location>
</feature>
<gene>
    <name evidence="1" type="primary">rplV</name>
    <name type="ordered locus">Pfl01_5074</name>
</gene>
<protein>
    <recommendedName>
        <fullName evidence="1">Large ribosomal subunit protein uL22</fullName>
    </recommendedName>
    <alternativeName>
        <fullName evidence="2">50S ribosomal protein L22</fullName>
    </alternativeName>
</protein>
<dbReference type="EMBL" id="CP000094">
    <property type="protein sequence ID" value="ABA76811.1"/>
    <property type="molecule type" value="Genomic_DNA"/>
</dbReference>
<dbReference type="RefSeq" id="WP_003103908.1">
    <property type="nucleotide sequence ID" value="NC_007492.2"/>
</dbReference>
<dbReference type="SMR" id="Q3K5Z3"/>
<dbReference type="GeneID" id="98636788"/>
<dbReference type="KEGG" id="pfo:Pfl01_5074"/>
<dbReference type="eggNOG" id="COG0091">
    <property type="taxonomic scope" value="Bacteria"/>
</dbReference>
<dbReference type="HOGENOM" id="CLU_083987_3_3_6"/>
<dbReference type="Proteomes" id="UP000002704">
    <property type="component" value="Chromosome"/>
</dbReference>
<dbReference type="GO" id="GO:0022625">
    <property type="term" value="C:cytosolic large ribosomal subunit"/>
    <property type="evidence" value="ECO:0007669"/>
    <property type="project" value="TreeGrafter"/>
</dbReference>
<dbReference type="GO" id="GO:0019843">
    <property type="term" value="F:rRNA binding"/>
    <property type="evidence" value="ECO:0007669"/>
    <property type="project" value="UniProtKB-UniRule"/>
</dbReference>
<dbReference type="GO" id="GO:0003735">
    <property type="term" value="F:structural constituent of ribosome"/>
    <property type="evidence" value="ECO:0007669"/>
    <property type="project" value="InterPro"/>
</dbReference>
<dbReference type="GO" id="GO:0006412">
    <property type="term" value="P:translation"/>
    <property type="evidence" value="ECO:0007669"/>
    <property type="project" value="UniProtKB-UniRule"/>
</dbReference>
<dbReference type="CDD" id="cd00336">
    <property type="entry name" value="Ribosomal_L22"/>
    <property type="match status" value="1"/>
</dbReference>
<dbReference type="FunFam" id="3.90.470.10:FF:000001">
    <property type="entry name" value="50S ribosomal protein L22"/>
    <property type="match status" value="1"/>
</dbReference>
<dbReference type="Gene3D" id="3.90.470.10">
    <property type="entry name" value="Ribosomal protein L22/L17"/>
    <property type="match status" value="1"/>
</dbReference>
<dbReference type="HAMAP" id="MF_01331_B">
    <property type="entry name" value="Ribosomal_uL22_B"/>
    <property type="match status" value="1"/>
</dbReference>
<dbReference type="InterPro" id="IPR001063">
    <property type="entry name" value="Ribosomal_uL22"/>
</dbReference>
<dbReference type="InterPro" id="IPR005727">
    <property type="entry name" value="Ribosomal_uL22_bac/chlpt-type"/>
</dbReference>
<dbReference type="InterPro" id="IPR047867">
    <property type="entry name" value="Ribosomal_uL22_bac/org-type"/>
</dbReference>
<dbReference type="InterPro" id="IPR018260">
    <property type="entry name" value="Ribosomal_uL22_CS"/>
</dbReference>
<dbReference type="InterPro" id="IPR036394">
    <property type="entry name" value="Ribosomal_uL22_sf"/>
</dbReference>
<dbReference type="NCBIfam" id="TIGR01044">
    <property type="entry name" value="rplV_bact"/>
    <property type="match status" value="1"/>
</dbReference>
<dbReference type="PANTHER" id="PTHR13501">
    <property type="entry name" value="CHLOROPLAST 50S RIBOSOMAL PROTEIN L22-RELATED"/>
    <property type="match status" value="1"/>
</dbReference>
<dbReference type="PANTHER" id="PTHR13501:SF8">
    <property type="entry name" value="LARGE RIBOSOMAL SUBUNIT PROTEIN UL22M"/>
    <property type="match status" value="1"/>
</dbReference>
<dbReference type="Pfam" id="PF00237">
    <property type="entry name" value="Ribosomal_L22"/>
    <property type="match status" value="1"/>
</dbReference>
<dbReference type="SUPFAM" id="SSF54843">
    <property type="entry name" value="Ribosomal protein L22"/>
    <property type="match status" value="1"/>
</dbReference>
<dbReference type="PROSITE" id="PS00464">
    <property type="entry name" value="RIBOSOMAL_L22"/>
    <property type="match status" value="1"/>
</dbReference>
<evidence type="ECO:0000255" key="1">
    <source>
        <dbReference type="HAMAP-Rule" id="MF_01331"/>
    </source>
</evidence>
<evidence type="ECO:0000305" key="2"/>
<name>RL22_PSEPF</name>
<proteinExistence type="inferred from homology"/>
<organism>
    <name type="scientific">Pseudomonas fluorescens (strain Pf0-1)</name>
    <dbReference type="NCBI Taxonomy" id="205922"/>
    <lineage>
        <taxon>Bacteria</taxon>
        <taxon>Pseudomonadati</taxon>
        <taxon>Pseudomonadota</taxon>
        <taxon>Gammaproteobacteria</taxon>
        <taxon>Pseudomonadales</taxon>
        <taxon>Pseudomonadaceae</taxon>
        <taxon>Pseudomonas</taxon>
    </lineage>
</organism>
<sequence length="110" mass="11911">MEVAAKLSGARISAQKARLVADQIRGKKVGEALNLLAFSSKKAAEIMKKVLESAVANAEHNEGADVDDLKVSTVFVNEGRSLKRIMPRAKGRADRIVKRSCHITVKVADK</sequence>
<reference key="1">
    <citation type="journal article" date="2009" name="Genome Biol.">
        <title>Genomic and genetic analyses of diversity and plant interactions of Pseudomonas fluorescens.</title>
        <authorList>
            <person name="Silby M.W."/>
            <person name="Cerdeno-Tarraga A.M."/>
            <person name="Vernikos G.S."/>
            <person name="Giddens S.R."/>
            <person name="Jackson R.W."/>
            <person name="Preston G.M."/>
            <person name="Zhang X.-X."/>
            <person name="Moon C.D."/>
            <person name="Gehrig S.M."/>
            <person name="Godfrey S.A.C."/>
            <person name="Knight C.G."/>
            <person name="Malone J.G."/>
            <person name="Robinson Z."/>
            <person name="Spiers A.J."/>
            <person name="Harris S."/>
            <person name="Challis G.L."/>
            <person name="Yaxley A.M."/>
            <person name="Harris D."/>
            <person name="Seeger K."/>
            <person name="Murphy L."/>
            <person name="Rutter S."/>
            <person name="Squares R."/>
            <person name="Quail M.A."/>
            <person name="Saunders E."/>
            <person name="Mavromatis K."/>
            <person name="Brettin T.S."/>
            <person name="Bentley S.D."/>
            <person name="Hothersall J."/>
            <person name="Stephens E."/>
            <person name="Thomas C.M."/>
            <person name="Parkhill J."/>
            <person name="Levy S.B."/>
            <person name="Rainey P.B."/>
            <person name="Thomson N.R."/>
        </authorList>
    </citation>
    <scope>NUCLEOTIDE SEQUENCE [LARGE SCALE GENOMIC DNA]</scope>
    <source>
        <strain>Pf0-1</strain>
    </source>
</reference>
<comment type="function">
    <text evidence="1">This protein binds specifically to 23S rRNA; its binding is stimulated by other ribosomal proteins, e.g. L4, L17, and L20. It is important during the early stages of 50S assembly. It makes multiple contacts with different domains of the 23S rRNA in the assembled 50S subunit and ribosome (By similarity).</text>
</comment>
<comment type="function">
    <text evidence="1">The globular domain of the protein is located near the polypeptide exit tunnel on the outside of the subunit, while an extended beta-hairpin is found that lines the wall of the exit tunnel in the center of the 70S ribosome.</text>
</comment>
<comment type="subunit">
    <text evidence="1">Part of the 50S ribosomal subunit.</text>
</comment>
<comment type="similarity">
    <text evidence="1">Belongs to the universal ribosomal protein uL22 family.</text>
</comment>
<accession>Q3K5Z3</accession>